<dbReference type="EMBL" id="CP000243">
    <property type="protein sequence ID" value="ABE09204.1"/>
    <property type="molecule type" value="Genomic_DNA"/>
</dbReference>
<dbReference type="RefSeq" id="WP_000447529.1">
    <property type="nucleotide sequence ID" value="NZ_CP064825.1"/>
</dbReference>
<dbReference type="EMDB" id="EMD-48479"/>
<dbReference type="EMDB" id="EMD-48513"/>
<dbReference type="SMR" id="Q1R610"/>
<dbReference type="GeneID" id="93778672"/>
<dbReference type="KEGG" id="eci:UTI89_C3767"/>
<dbReference type="HOGENOM" id="CLU_083987_3_3_6"/>
<dbReference type="Proteomes" id="UP000001952">
    <property type="component" value="Chromosome"/>
</dbReference>
<dbReference type="GO" id="GO:0022625">
    <property type="term" value="C:cytosolic large ribosomal subunit"/>
    <property type="evidence" value="ECO:0007669"/>
    <property type="project" value="TreeGrafter"/>
</dbReference>
<dbReference type="GO" id="GO:0019843">
    <property type="term" value="F:rRNA binding"/>
    <property type="evidence" value="ECO:0007669"/>
    <property type="project" value="UniProtKB-UniRule"/>
</dbReference>
<dbReference type="GO" id="GO:0003735">
    <property type="term" value="F:structural constituent of ribosome"/>
    <property type="evidence" value="ECO:0007669"/>
    <property type="project" value="InterPro"/>
</dbReference>
<dbReference type="GO" id="GO:0006412">
    <property type="term" value="P:translation"/>
    <property type="evidence" value="ECO:0007669"/>
    <property type="project" value="UniProtKB-UniRule"/>
</dbReference>
<dbReference type="CDD" id="cd00336">
    <property type="entry name" value="Ribosomal_L22"/>
    <property type="match status" value="1"/>
</dbReference>
<dbReference type="FunFam" id="3.90.470.10:FF:000001">
    <property type="entry name" value="50S ribosomal protein L22"/>
    <property type="match status" value="1"/>
</dbReference>
<dbReference type="Gene3D" id="3.90.470.10">
    <property type="entry name" value="Ribosomal protein L22/L17"/>
    <property type="match status" value="1"/>
</dbReference>
<dbReference type="HAMAP" id="MF_01331_B">
    <property type="entry name" value="Ribosomal_uL22_B"/>
    <property type="match status" value="1"/>
</dbReference>
<dbReference type="InterPro" id="IPR001063">
    <property type="entry name" value="Ribosomal_uL22"/>
</dbReference>
<dbReference type="InterPro" id="IPR005727">
    <property type="entry name" value="Ribosomal_uL22_bac/chlpt-type"/>
</dbReference>
<dbReference type="InterPro" id="IPR047867">
    <property type="entry name" value="Ribosomal_uL22_bac/org-type"/>
</dbReference>
<dbReference type="InterPro" id="IPR018260">
    <property type="entry name" value="Ribosomal_uL22_CS"/>
</dbReference>
<dbReference type="InterPro" id="IPR036394">
    <property type="entry name" value="Ribosomal_uL22_sf"/>
</dbReference>
<dbReference type="NCBIfam" id="TIGR01044">
    <property type="entry name" value="rplV_bact"/>
    <property type="match status" value="1"/>
</dbReference>
<dbReference type="PANTHER" id="PTHR13501">
    <property type="entry name" value="CHLOROPLAST 50S RIBOSOMAL PROTEIN L22-RELATED"/>
    <property type="match status" value="1"/>
</dbReference>
<dbReference type="PANTHER" id="PTHR13501:SF8">
    <property type="entry name" value="LARGE RIBOSOMAL SUBUNIT PROTEIN UL22M"/>
    <property type="match status" value="1"/>
</dbReference>
<dbReference type="Pfam" id="PF00237">
    <property type="entry name" value="Ribosomal_L22"/>
    <property type="match status" value="1"/>
</dbReference>
<dbReference type="SUPFAM" id="SSF54843">
    <property type="entry name" value="Ribosomal protein L22"/>
    <property type="match status" value="1"/>
</dbReference>
<dbReference type="PROSITE" id="PS00464">
    <property type="entry name" value="RIBOSOMAL_L22"/>
    <property type="match status" value="1"/>
</dbReference>
<keyword id="KW-0687">Ribonucleoprotein</keyword>
<keyword id="KW-0689">Ribosomal protein</keyword>
<keyword id="KW-0694">RNA-binding</keyword>
<keyword id="KW-0699">rRNA-binding</keyword>
<evidence type="ECO:0000255" key="1">
    <source>
        <dbReference type="HAMAP-Rule" id="MF_01331"/>
    </source>
</evidence>
<evidence type="ECO:0000305" key="2"/>
<organism>
    <name type="scientific">Escherichia coli (strain UTI89 / UPEC)</name>
    <dbReference type="NCBI Taxonomy" id="364106"/>
    <lineage>
        <taxon>Bacteria</taxon>
        <taxon>Pseudomonadati</taxon>
        <taxon>Pseudomonadota</taxon>
        <taxon>Gammaproteobacteria</taxon>
        <taxon>Enterobacterales</taxon>
        <taxon>Enterobacteriaceae</taxon>
        <taxon>Escherichia</taxon>
    </lineage>
</organism>
<reference key="1">
    <citation type="journal article" date="2006" name="Proc. Natl. Acad. Sci. U.S.A.">
        <title>Identification of genes subject to positive selection in uropathogenic strains of Escherichia coli: a comparative genomics approach.</title>
        <authorList>
            <person name="Chen S.L."/>
            <person name="Hung C.-S."/>
            <person name="Xu J."/>
            <person name="Reigstad C.S."/>
            <person name="Magrini V."/>
            <person name="Sabo A."/>
            <person name="Blasiar D."/>
            <person name="Bieri T."/>
            <person name="Meyer R.R."/>
            <person name="Ozersky P."/>
            <person name="Armstrong J.R."/>
            <person name="Fulton R.S."/>
            <person name="Latreille J.P."/>
            <person name="Spieth J."/>
            <person name="Hooton T.M."/>
            <person name="Mardis E.R."/>
            <person name="Hultgren S.J."/>
            <person name="Gordon J.I."/>
        </authorList>
    </citation>
    <scope>NUCLEOTIDE SEQUENCE [LARGE SCALE GENOMIC DNA]</scope>
    <source>
        <strain>UTI89 / UPEC</strain>
    </source>
</reference>
<protein>
    <recommendedName>
        <fullName evidence="1">Large ribosomal subunit protein uL22</fullName>
    </recommendedName>
    <alternativeName>
        <fullName evidence="2">50S ribosomal protein L22</fullName>
    </alternativeName>
</protein>
<proteinExistence type="inferred from homology"/>
<sequence>METIAKHRHARSSAQKVRLVADLIRGKKVSQALDILTYTNKKAAVLVKKVLESAIANAEHNDGADIDDLKVTKIFVDEGPSMKRIMPRAKGRADRILKRTSHITVVVSDR</sequence>
<gene>
    <name evidence="1" type="primary">rplV</name>
    <name type="ordered locus">UTI89_C3767</name>
</gene>
<accession>Q1R610</accession>
<name>RL22_ECOUT</name>
<feature type="chain" id="PRO_1000052570" description="Large ribosomal subunit protein uL22">
    <location>
        <begin position="1"/>
        <end position="110"/>
    </location>
</feature>
<comment type="function">
    <text evidence="1">This protein binds specifically to 23S rRNA; its binding is stimulated by other ribosomal proteins, e.g. L4, L17, and L20. It is important during the early stages of 50S assembly. It makes multiple contacts with different domains of the 23S rRNA in the assembled 50S subunit and ribosome (By similarity).</text>
</comment>
<comment type="function">
    <text evidence="1">The globular domain of the protein is located near the polypeptide exit tunnel on the outside of the subunit, while an extended beta-hairpin is found that lines the wall of the exit tunnel in the center of the 70S ribosome.</text>
</comment>
<comment type="subunit">
    <text evidence="1">Part of the 50S ribosomal subunit.</text>
</comment>
<comment type="similarity">
    <text evidence="1">Belongs to the universal ribosomal protein uL22 family.</text>
</comment>